<accession>A4IZF4</accession>
<feature type="chain" id="PRO_1000018033" description="Arginine--tRNA ligase">
    <location>
        <begin position="1"/>
        <end position="581"/>
    </location>
</feature>
<feature type="short sequence motif" description="'HIGH' region">
    <location>
        <begin position="122"/>
        <end position="132"/>
    </location>
</feature>
<dbReference type="EC" id="6.1.1.19" evidence="1"/>
<dbReference type="EMBL" id="CP000608">
    <property type="protein sequence ID" value="ABO47304.1"/>
    <property type="molecule type" value="Genomic_DNA"/>
</dbReference>
<dbReference type="RefSeq" id="WP_003026922.1">
    <property type="nucleotide sequence ID" value="NC_009257.1"/>
</dbReference>
<dbReference type="SMR" id="A4IZF4"/>
<dbReference type="KEGG" id="ftw:FTW_1604"/>
<dbReference type="HOGENOM" id="CLU_006406_5_1_6"/>
<dbReference type="GO" id="GO:0005737">
    <property type="term" value="C:cytoplasm"/>
    <property type="evidence" value="ECO:0007669"/>
    <property type="project" value="UniProtKB-SubCell"/>
</dbReference>
<dbReference type="GO" id="GO:0004814">
    <property type="term" value="F:arginine-tRNA ligase activity"/>
    <property type="evidence" value="ECO:0007669"/>
    <property type="project" value="UniProtKB-UniRule"/>
</dbReference>
<dbReference type="GO" id="GO:0005524">
    <property type="term" value="F:ATP binding"/>
    <property type="evidence" value="ECO:0007669"/>
    <property type="project" value="UniProtKB-UniRule"/>
</dbReference>
<dbReference type="GO" id="GO:0006420">
    <property type="term" value="P:arginyl-tRNA aminoacylation"/>
    <property type="evidence" value="ECO:0007669"/>
    <property type="project" value="UniProtKB-UniRule"/>
</dbReference>
<dbReference type="CDD" id="cd00671">
    <property type="entry name" value="ArgRS_core"/>
    <property type="match status" value="1"/>
</dbReference>
<dbReference type="Gene3D" id="3.30.1360.70">
    <property type="entry name" value="Arginyl tRNA synthetase N-terminal domain"/>
    <property type="match status" value="1"/>
</dbReference>
<dbReference type="Gene3D" id="3.40.50.620">
    <property type="entry name" value="HUPs"/>
    <property type="match status" value="1"/>
</dbReference>
<dbReference type="Gene3D" id="1.10.730.10">
    <property type="entry name" value="Isoleucyl-tRNA Synthetase, Domain 1"/>
    <property type="match status" value="1"/>
</dbReference>
<dbReference type="HAMAP" id="MF_00123">
    <property type="entry name" value="Arg_tRNA_synth"/>
    <property type="match status" value="1"/>
</dbReference>
<dbReference type="InterPro" id="IPR001412">
    <property type="entry name" value="aa-tRNA-synth_I_CS"/>
</dbReference>
<dbReference type="InterPro" id="IPR001278">
    <property type="entry name" value="Arg-tRNA-ligase"/>
</dbReference>
<dbReference type="InterPro" id="IPR005148">
    <property type="entry name" value="Arg-tRNA-synth_N"/>
</dbReference>
<dbReference type="InterPro" id="IPR036695">
    <property type="entry name" value="Arg-tRNA-synth_N_sf"/>
</dbReference>
<dbReference type="InterPro" id="IPR035684">
    <property type="entry name" value="ArgRS_core"/>
</dbReference>
<dbReference type="InterPro" id="IPR008909">
    <property type="entry name" value="DALR_anticod-bd"/>
</dbReference>
<dbReference type="InterPro" id="IPR014729">
    <property type="entry name" value="Rossmann-like_a/b/a_fold"/>
</dbReference>
<dbReference type="InterPro" id="IPR009080">
    <property type="entry name" value="tRNAsynth_Ia_anticodon-bd"/>
</dbReference>
<dbReference type="NCBIfam" id="TIGR00456">
    <property type="entry name" value="argS"/>
    <property type="match status" value="1"/>
</dbReference>
<dbReference type="PANTHER" id="PTHR11956:SF5">
    <property type="entry name" value="ARGININE--TRNA LIGASE, CYTOPLASMIC"/>
    <property type="match status" value="1"/>
</dbReference>
<dbReference type="PANTHER" id="PTHR11956">
    <property type="entry name" value="ARGINYL-TRNA SYNTHETASE"/>
    <property type="match status" value="1"/>
</dbReference>
<dbReference type="Pfam" id="PF03485">
    <property type="entry name" value="Arg_tRNA_synt_N"/>
    <property type="match status" value="1"/>
</dbReference>
<dbReference type="Pfam" id="PF05746">
    <property type="entry name" value="DALR_1"/>
    <property type="match status" value="1"/>
</dbReference>
<dbReference type="Pfam" id="PF00750">
    <property type="entry name" value="tRNA-synt_1d"/>
    <property type="match status" value="1"/>
</dbReference>
<dbReference type="PRINTS" id="PR01038">
    <property type="entry name" value="TRNASYNTHARG"/>
</dbReference>
<dbReference type="SMART" id="SM01016">
    <property type="entry name" value="Arg_tRNA_synt_N"/>
    <property type="match status" value="1"/>
</dbReference>
<dbReference type="SMART" id="SM00836">
    <property type="entry name" value="DALR_1"/>
    <property type="match status" value="1"/>
</dbReference>
<dbReference type="SUPFAM" id="SSF47323">
    <property type="entry name" value="Anticodon-binding domain of a subclass of class I aminoacyl-tRNA synthetases"/>
    <property type="match status" value="1"/>
</dbReference>
<dbReference type="SUPFAM" id="SSF55190">
    <property type="entry name" value="Arginyl-tRNA synthetase (ArgRS), N-terminal 'additional' domain"/>
    <property type="match status" value="1"/>
</dbReference>
<dbReference type="SUPFAM" id="SSF52374">
    <property type="entry name" value="Nucleotidylyl transferase"/>
    <property type="match status" value="1"/>
</dbReference>
<dbReference type="PROSITE" id="PS00178">
    <property type="entry name" value="AA_TRNA_LIGASE_I"/>
    <property type="match status" value="1"/>
</dbReference>
<gene>
    <name evidence="1" type="primary">argS</name>
    <name type="ordered locus">FTW_1604</name>
</gene>
<reference key="1">
    <citation type="journal article" date="2007" name="PLoS ONE">
        <title>Complete genomic characterization of a pathogenic A.II strain of Francisella tularensis subspecies tularensis.</title>
        <authorList>
            <person name="Beckstrom-Sternberg S.M."/>
            <person name="Auerbach R.K."/>
            <person name="Godbole S."/>
            <person name="Pearson J.V."/>
            <person name="Beckstrom-Sternberg J.S."/>
            <person name="Deng Z."/>
            <person name="Munk C."/>
            <person name="Kubota K."/>
            <person name="Zhou Y."/>
            <person name="Bruce D."/>
            <person name="Noronha J."/>
            <person name="Scheuermann R.H."/>
            <person name="Wang A."/>
            <person name="Wei X."/>
            <person name="Wang J."/>
            <person name="Hao J."/>
            <person name="Wagner D.M."/>
            <person name="Brettin T.S."/>
            <person name="Brown N."/>
            <person name="Gilna P."/>
            <person name="Keim P.S."/>
        </authorList>
    </citation>
    <scope>NUCLEOTIDE SEQUENCE [LARGE SCALE GENOMIC DNA]</scope>
    <source>
        <strain>WY96-3418</strain>
    </source>
</reference>
<sequence>MNIENYLSETLAKVFQKLGYAESFAKVVTSTREDVGHFQCNGAMPLAKFAKKPPLAIAEEIVEHIDAEDIFAKLEVAKPGFINITLAPKFLADTTNRFLNSNKFGVQNNLPNRKVVLDFGGPNVAKPMHVGHIRSALLGDALQRIHRFCGDTVVSDVHLGDWGTQMGMLIEEIKLQSPQLVYFDENYTGEYPTESPVTVQELAEIYPRASKRCKSDINEMEKARLATFELQQGRRGYVALWQHFVRISIDAVKKDFDSLDVHFDLWLGESDANKFIDEMISYFQANNFIYEDEGAWVIDTNKDGVPPLIVIKKDGGVMYGTTDLATLWQRSKDLDPDEIIYVVDKRQSLHFKQVFSVAERTKVVSEKCKLKHVAFGTVNGKDGRPFKTREGGVMHLADLISQAKEYAKNRMPDENDDSIIDQIAMATIKFGDLINNYANDYFFDLEKFAQHEGKTGPYLLYTVVRAKSILRKIFGDNYDIKSLAKDYKVVNAHNEYEEKLQLQLIQFPIAVQRAYENSQPHHICEYAYSLANSFNKFYVNCPINNLDDESLKKARIALCMATVKAMTIASDLIGISIPERM</sequence>
<name>SYR_FRATW</name>
<keyword id="KW-0030">Aminoacyl-tRNA synthetase</keyword>
<keyword id="KW-0067">ATP-binding</keyword>
<keyword id="KW-0963">Cytoplasm</keyword>
<keyword id="KW-0436">Ligase</keyword>
<keyword id="KW-0547">Nucleotide-binding</keyword>
<keyword id="KW-0648">Protein biosynthesis</keyword>
<proteinExistence type="inferred from homology"/>
<comment type="catalytic activity">
    <reaction evidence="1">
        <text>tRNA(Arg) + L-arginine + ATP = L-arginyl-tRNA(Arg) + AMP + diphosphate</text>
        <dbReference type="Rhea" id="RHEA:20301"/>
        <dbReference type="Rhea" id="RHEA-COMP:9658"/>
        <dbReference type="Rhea" id="RHEA-COMP:9673"/>
        <dbReference type="ChEBI" id="CHEBI:30616"/>
        <dbReference type="ChEBI" id="CHEBI:32682"/>
        <dbReference type="ChEBI" id="CHEBI:33019"/>
        <dbReference type="ChEBI" id="CHEBI:78442"/>
        <dbReference type="ChEBI" id="CHEBI:78513"/>
        <dbReference type="ChEBI" id="CHEBI:456215"/>
        <dbReference type="EC" id="6.1.1.19"/>
    </reaction>
</comment>
<comment type="subunit">
    <text evidence="1">Monomer.</text>
</comment>
<comment type="subcellular location">
    <subcellularLocation>
        <location evidence="1">Cytoplasm</location>
    </subcellularLocation>
</comment>
<comment type="similarity">
    <text evidence="1">Belongs to the class-I aminoacyl-tRNA synthetase family.</text>
</comment>
<organism>
    <name type="scientific">Francisella tularensis subsp. tularensis (strain WY96-3418)</name>
    <dbReference type="NCBI Taxonomy" id="418136"/>
    <lineage>
        <taxon>Bacteria</taxon>
        <taxon>Pseudomonadati</taxon>
        <taxon>Pseudomonadota</taxon>
        <taxon>Gammaproteobacteria</taxon>
        <taxon>Thiotrichales</taxon>
        <taxon>Francisellaceae</taxon>
        <taxon>Francisella</taxon>
    </lineage>
</organism>
<protein>
    <recommendedName>
        <fullName evidence="1">Arginine--tRNA ligase</fullName>
        <ecNumber evidence="1">6.1.1.19</ecNumber>
    </recommendedName>
    <alternativeName>
        <fullName evidence="1">Arginyl-tRNA synthetase</fullName>
        <shortName evidence="1">ArgRS</shortName>
    </alternativeName>
</protein>
<evidence type="ECO:0000255" key="1">
    <source>
        <dbReference type="HAMAP-Rule" id="MF_00123"/>
    </source>
</evidence>